<accession>P53215</accession>
<accession>D6VUF8</accession>
<accession>Q45U59</accession>
<feature type="initiator methionine" description="Removed" evidence="13">
    <location>
        <position position="1"/>
    </location>
</feature>
<feature type="chain" id="PRO_0000202788" description="tRNA(His) guanylyltransferase">
    <location>
        <begin position="2"/>
        <end position="237"/>
    </location>
</feature>
<feature type="binding site" evidence="7 12">
    <location>
        <position position="29"/>
    </location>
    <ligand>
        <name>Mg(2+)</name>
        <dbReference type="ChEBI" id="CHEBI:18420"/>
        <note>catalytic</note>
    </ligand>
</feature>
<feature type="binding site" evidence="7 12">
    <location>
        <position position="30"/>
    </location>
    <ligand>
        <name>Mg(2+)</name>
        <dbReference type="ChEBI" id="CHEBI:18420"/>
        <note>catalytic</note>
    </ligand>
</feature>
<feature type="binding site" evidence="7 12">
    <location>
        <position position="32"/>
    </location>
    <ligand>
        <name>GTP</name>
        <dbReference type="ChEBI" id="CHEBI:37565"/>
    </ligand>
</feature>
<feature type="binding site" evidence="7 12">
    <location>
        <position position="33"/>
    </location>
    <ligand>
        <name>GTP</name>
        <dbReference type="ChEBI" id="CHEBI:37565"/>
    </ligand>
</feature>
<feature type="binding site" evidence="7 12">
    <location>
        <position position="34"/>
    </location>
    <ligand>
        <name>GTP</name>
        <dbReference type="ChEBI" id="CHEBI:37565"/>
    </ligand>
</feature>
<feature type="binding site" evidence="7 12">
    <location>
        <position position="44"/>
    </location>
    <ligand>
        <name>GTP</name>
        <dbReference type="ChEBI" id="CHEBI:37565"/>
    </ligand>
</feature>
<feature type="binding site" evidence="7 12">
    <location>
        <position position="47"/>
    </location>
    <ligand>
        <name>GTP</name>
        <dbReference type="ChEBI" id="CHEBI:37565"/>
    </ligand>
</feature>
<feature type="binding site" evidence="7 12">
    <location>
        <position position="77"/>
    </location>
    <ligand>
        <name>Mg(2+)</name>
        <dbReference type="ChEBI" id="CHEBI:18420"/>
        <note>catalytic</note>
    </ligand>
</feature>
<feature type="modified residue" description="N-acetylalanine" evidence="9">
    <location>
        <position position="2"/>
    </location>
</feature>
<feature type="mutagenesis site" description="Significantly affects the G(-1) addition." evidence="5">
    <original>R</original>
    <variation>A</variation>
    <location>
        <position position="27"/>
    </location>
</feature>
<feature type="mutagenesis site" description="Significantly affects the G(-1) addition." evidence="8">
    <original>N</original>
    <variation>Y</variation>
    <location>
        <position position="46"/>
    </location>
</feature>
<feature type="mutagenesis site" description="Allows for altered tRNA substrate recognition." evidence="5">
    <original>D</original>
    <variation>A</variation>
    <location>
        <position position="68"/>
    </location>
</feature>
<feature type="mutagenesis site" description="Significantly affects the G(-1) addition." evidence="5">
    <original>D</original>
    <variation>A</variation>
    <location>
        <position position="77"/>
    </location>
</feature>
<feature type="mutagenesis site" description="Significantly affects the G(-1) addition." evidence="5">
    <original>E</original>
    <variation>A</variation>
    <location>
        <position position="78"/>
    </location>
</feature>
<feature type="mutagenesis site" description="Significantly affects the G(-1) addition." evidence="5">
    <original>R</original>
    <variation>A</variation>
    <location>
        <position position="93"/>
    </location>
</feature>
<feature type="mutagenesis site" description="Significantly affects the G(-1) addition." evidence="5">
    <original>K</original>
    <variation>A</variation>
    <location>
        <position position="96"/>
    </location>
</feature>
<feature type="mutagenesis site" description="Significantly affects the G(-1) addition." evidence="5">
    <original>D</original>
    <variation>A</variation>
    <location>
        <position position="131"/>
    </location>
</feature>
<feature type="mutagenesis site" description="Significantly affects the G(-1) addition." evidence="5">
    <original>R</original>
    <variation>A</variation>
    <location>
        <position position="133"/>
    </location>
</feature>
<feature type="mutagenesis site" description="Significantly affects the G(-1) addition." evidence="5">
    <original>R</original>
    <variation>A</variation>
    <location>
        <position position="150"/>
    </location>
</feature>
<feature type="mutagenesis site" description="Significantly affects the G(-1) addition." evidence="5">
    <original>H</original>
    <variation>A</variation>
    <location>
        <position position="155"/>
    </location>
</feature>
<feature type="mutagenesis site" description="Significantly affects the G(-1) addition." evidence="5">
    <original>N</original>
    <variation>A</variation>
    <location>
        <position position="157"/>
    </location>
</feature>
<feature type="mutagenesis site" description="Significantly affects the G(-1) addition." evidence="5">
    <original>Y</original>
    <variation>A</variation>
    <location>
        <position position="160"/>
    </location>
</feature>
<feature type="mutagenesis site" description="Significantly affects the G(-1) addition." evidence="8">
    <original>Y</original>
    <variation>M</variation>
    <location>
        <position position="160"/>
    </location>
</feature>
<feature type="mutagenesis site" description="Significantly affects the G(-1) addition." evidence="8">
    <original>T</original>
    <variation>A</variation>
    <location>
        <position position="185"/>
    </location>
</feature>
<feature type="mutagenesis site" description="Significantly affects the G(-1) addition." evidence="5">
    <original>K</original>
    <variation>A</variation>
    <location>
        <position position="190"/>
    </location>
</feature>
<feature type="mutagenesis site" description="Significantly affects the G(-1) addition." evidence="5">
    <original>Y</original>
    <variation>A</variation>
    <location>
        <position position="202"/>
    </location>
</feature>
<feature type="helix" evidence="14">
    <location>
        <begin position="7"/>
        <end position="12"/>
    </location>
</feature>
<feature type="strand" evidence="14">
    <location>
        <begin position="23"/>
        <end position="30"/>
    </location>
</feature>
<feature type="helix" evidence="14">
    <location>
        <begin position="33"/>
        <end position="39"/>
    </location>
</feature>
<feature type="helix" evidence="14">
    <location>
        <begin position="48"/>
        <end position="64"/>
    </location>
</feature>
<feature type="turn" evidence="14">
    <location>
        <begin position="65"/>
        <end position="68"/>
    </location>
</feature>
<feature type="strand" evidence="14">
    <location>
        <begin position="69"/>
        <end position="74"/>
    </location>
</feature>
<feature type="strand" evidence="14">
    <location>
        <begin position="76"/>
        <end position="83"/>
    </location>
</feature>
<feature type="helix" evidence="14">
    <location>
        <begin position="89"/>
        <end position="92"/>
    </location>
</feature>
<feature type="helix" evidence="14">
    <location>
        <begin position="94"/>
        <end position="116"/>
    </location>
</feature>
<feature type="strand" evidence="14">
    <location>
        <begin position="118"/>
        <end position="120"/>
    </location>
</feature>
<feature type="strand" evidence="14">
    <location>
        <begin position="124"/>
        <end position="126"/>
    </location>
</feature>
<feature type="strand" evidence="14">
    <location>
        <begin position="130"/>
        <end position="139"/>
    </location>
</feature>
<feature type="helix" evidence="14">
    <location>
        <begin position="140"/>
        <end position="171"/>
    </location>
</feature>
<feature type="helix" evidence="14">
    <location>
        <begin position="175"/>
        <end position="182"/>
    </location>
</feature>
<feature type="helix" evidence="14">
    <location>
        <begin position="187"/>
        <end position="195"/>
    </location>
</feature>
<feature type="helix" evidence="14">
    <location>
        <begin position="207"/>
        <end position="210"/>
    </location>
</feature>
<feature type="strand" evidence="14">
    <location>
        <begin position="213"/>
        <end position="221"/>
    </location>
</feature>
<feature type="helix" evidence="14">
    <location>
        <begin position="229"/>
        <end position="232"/>
    </location>
</feature>
<protein>
    <recommendedName>
        <fullName evidence="10">tRNA(His) guanylyltransferase</fullName>
        <ecNumber evidence="2 5 6">2.7.7.79</ecNumber>
    </recommendedName>
    <alternativeName>
        <fullName evidence="10">tRNA-histidine guanylyltransferase</fullName>
    </alternativeName>
</protein>
<organism>
    <name type="scientific">Saccharomyces cerevisiae (strain ATCC 204508 / S288c)</name>
    <name type="common">Baker's yeast</name>
    <dbReference type="NCBI Taxonomy" id="559292"/>
    <lineage>
        <taxon>Eukaryota</taxon>
        <taxon>Fungi</taxon>
        <taxon>Dikarya</taxon>
        <taxon>Ascomycota</taxon>
        <taxon>Saccharomycotina</taxon>
        <taxon>Saccharomycetes</taxon>
        <taxon>Saccharomycetales</taxon>
        <taxon>Saccharomycetaceae</taxon>
        <taxon>Saccharomyces</taxon>
    </lineage>
</organism>
<reference key="1">
    <citation type="journal article" date="2005" name="Nat. Genet.">
        <title>Quantitative trait loci mapped to single-nucleotide resolution in yeast.</title>
        <authorList>
            <person name="Deutschbauer A.M."/>
            <person name="Davis R.W."/>
        </authorList>
    </citation>
    <scope>NUCLEOTIDE SEQUENCE [GENOMIC DNA]</scope>
    <source>
        <strain>SK1</strain>
    </source>
</reference>
<reference key="2">
    <citation type="journal article" date="1997" name="Yeast">
        <title>Sequence analysis of 203 kilobases from Saccharomyces cerevisiae chromosome VII.</title>
        <authorList>
            <person name="Rieger M."/>
            <person name="Brueckner M."/>
            <person name="Schaefer M."/>
            <person name="Mueller-Auer S."/>
        </authorList>
    </citation>
    <scope>NUCLEOTIDE SEQUENCE [GENOMIC DNA]</scope>
    <source>
        <strain>ATCC 204508 / S288c</strain>
    </source>
</reference>
<reference key="3">
    <citation type="journal article" date="1997" name="Nature">
        <title>The nucleotide sequence of Saccharomyces cerevisiae chromosome VII.</title>
        <authorList>
            <person name="Tettelin H."/>
            <person name="Agostoni-Carbone M.L."/>
            <person name="Albermann K."/>
            <person name="Albers M."/>
            <person name="Arroyo J."/>
            <person name="Backes U."/>
            <person name="Barreiros T."/>
            <person name="Bertani I."/>
            <person name="Bjourson A.J."/>
            <person name="Brueckner M."/>
            <person name="Bruschi C.V."/>
            <person name="Carignani G."/>
            <person name="Castagnoli L."/>
            <person name="Cerdan E."/>
            <person name="Clemente M.L."/>
            <person name="Coblenz A."/>
            <person name="Coglievina M."/>
            <person name="Coissac E."/>
            <person name="Defoor E."/>
            <person name="Del Bino S."/>
            <person name="Delius H."/>
            <person name="Delneri D."/>
            <person name="de Wergifosse P."/>
            <person name="Dujon B."/>
            <person name="Durand P."/>
            <person name="Entian K.-D."/>
            <person name="Eraso P."/>
            <person name="Escribano V."/>
            <person name="Fabiani L."/>
            <person name="Fartmann B."/>
            <person name="Feroli F."/>
            <person name="Feuermann M."/>
            <person name="Frontali L."/>
            <person name="Garcia-Gonzalez M."/>
            <person name="Garcia-Saez M.I."/>
            <person name="Goffeau A."/>
            <person name="Guerreiro P."/>
            <person name="Hani J."/>
            <person name="Hansen M."/>
            <person name="Hebling U."/>
            <person name="Hernandez K."/>
            <person name="Heumann K."/>
            <person name="Hilger F."/>
            <person name="Hofmann B."/>
            <person name="Indge K.J."/>
            <person name="James C.M."/>
            <person name="Klima R."/>
            <person name="Koetter P."/>
            <person name="Kramer B."/>
            <person name="Kramer W."/>
            <person name="Lauquin G."/>
            <person name="Leuther H."/>
            <person name="Louis E.J."/>
            <person name="Maillier E."/>
            <person name="Marconi A."/>
            <person name="Martegani E."/>
            <person name="Mazon M.J."/>
            <person name="Mazzoni C."/>
            <person name="McReynolds A.D.K."/>
            <person name="Melchioretto P."/>
            <person name="Mewes H.-W."/>
            <person name="Minenkova O."/>
            <person name="Mueller-Auer S."/>
            <person name="Nawrocki A."/>
            <person name="Netter P."/>
            <person name="Neu R."/>
            <person name="Nombela C."/>
            <person name="Oliver S.G."/>
            <person name="Panzeri L."/>
            <person name="Paoluzi S."/>
            <person name="Plevani P."/>
            <person name="Portetelle D."/>
            <person name="Portillo F."/>
            <person name="Potier S."/>
            <person name="Purnelle B."/>
            <person name="Rieger M."/>
            <person name="Riles L."/>
            <person name="Rinaldi T."/>
            <person name="Robben J."/>
            <person name="Rodrigues-Pousada C."/>
            <person name="Rodriguez-Belmonte E."/>
            <person name="Rodriguez-Torres A.M."/>
            <person name="Rose M."/>
            <person name="Ruzzi M."/>
            <person name="Saliola M."/>
            <person name="Sanchez-Perez M."/>
            <person name="Schaefer B."/>
            <person name="Schaefer M."/>
            <person name="Scharfe M."/>
            <person name="Schmidheini T."/>
            <person name="Schreer A."/>
            <person name="Skala J."/>
            <person name="Souciet J.-L."/>
            <person name="Steensma H.Y."/>
            <person name="Talla E."/>
            <person name="Thierry A."/>
            <person name="Vandenbol M."/>
            <person name="van der Aart Q.J.M."/>
            <person name="Van Dyck L."/>
            <person name="Vanoni M."/>
            <person name="Verhasselt P."/>
            <person name="Voet M."/>
            <person name="Volckaert G."/>
            <person name="Wambutt R."/>
            <person name="Watson M.D."/>
            <person name="Weber N."/>
            <person name="Wedler E."/>
            <person name="Wedler H."/>
            <person name="Wipfli P."/>
            <person name="Wolf K."/>
            <person name="Wright L.F."/>
            <person name="Zaccaria P."/>
            <person name="Zimmermann M."/>
            <person name="Zollner A."/>
            <person name="Kleine K."/>
        </authorList>
    </citation>
    <scope>NUCLEOTIDE SEQUENCE [LARGE SCALE GENOMIC DNA]</scope>
    <source>
        <strain>ATCC 204508 / S288c</strain>
    </source>
</reference>
<reference key="4">
    <citation type="journal article" date="2014" name="G3 (Bethesda)">
        <title>The reference genome sequence of Saccharomyces cerevisiae: Then and now.</title>
        <authorList>
            <person name="Engel S.R."/>
            <person name="Dietrich F.S."/>
            <person name="Fisk D.G."/>
            <person name="Binkley G."/>
            <person name="Balakrishnan R."/>
            <person name="Costanzo M.C."/>
            <person name="Dwight S.S."/>
            <person name="Hitz B.C."/>
            <person name="Karra K."/>
            <person name="Nash R.S."/>
            <person name="Weng S."/>
            <person name="Wong E.D."/>
            <person name="Lloyd P."/>
            <person name="Skrzypek M.S."/>
            <person name="Miyasato S.R."/>
            <person name="Simison M."/>
            <person name="Cherry J.M."/>
        </authorList>
    </citation>
    <scope>GENOME REANNOTATION</scope>
    <source>
        <strain>ATCC 204508 / S288c</strain>
    </source>
</reference>
<reference key="5">
    <citation type="journal article" date="2007" name="Genome Res.">
        <title>Approaching a complete repository of sequence-verified protein-encoding clones for Saccharomyces cerevisiae.</title>
        <authorList>
            <person name="Hu Y."/>
            <person name="Rolfs A."/>
            <person name="Bhullar B."/>
            <person name="Murthy T.V.S."/>
            <person name="Zhu C."/>
            <person name="Berger M.F."/>
            <person name="Camargo A.A."/>
            <person name="Kelley F."/>
            <person name="McCarron S."/>
            <person name="Jepson D."/>
            <person name="Richardson A."/>
            <person name="Raphael J."/>
            <person name="Moreira D."/>
            <person name="Taycher E."/>
            <person name="Zuo D."/>
            <person name="Mohr S."/>
            <person name="Kane M.F."/>
            <person name="Williamson J."/>
            <person name="Simpson A.J.G."/>
            <person name="Bulyk M.L."/>
            <person name="Harlow E."/>
            <person name="Marsischky G."/>
            <person name="Kolodner R.D."/>
            <person name="LaBaer J."/>
        </authorList>
    </citation>
    <scope>NUCLEOTIDE SEQUENCE [GENOMIC DNA]</scope>
    <source>
        <strain>ATCC 204508 / S288c</strain>
    </source>
</reference>
<reference key="6">
    <citation type="journal article" date="2003" name="Genes Dev.">
        <title>tRNAHis maturation: an essential yeast protein catalyzes addition of a guanine nucleotide to the 5' end of tRNAHis.</title>
        <authorList>
            <person name="Gu W."/>
            <person name="Jackman J.E."/>
            <person name="Lohan A.J."/>
            <person name="Gray M.W."/>
            <person name="Phizicky E.M."/>
        </authorList>
    </citation>
    <scope>FUNCTION</scope>
    <scope>CATALYTIC ACTIVITY</scope>
</reference>
<reference key="7">
    <citation type="journal article" date="2003" name="Nature">
        <title>Global analysis of protein expression in yeast.</title>
        <authorList>
            <person name="Ghaemmaghami S."/>
            <person name="Huh W.-K."/>
            <person name="Bower K."/>
            <person name="Howson R.W."/>
            <person name="Belle A."/>
            <person name="Dephoure N."/>
            <person name="O'Shea E.K."/>
            <person name="Weissman J.S."/>
        </authorList>
    </citation>
    <scope>LEVEL OF PROTEIN EXPRESSION [LARGE SCALE ANALYSIS]</scope>
</reference>
<reference key="8">
    <citation type="journal article" date="2006" name="Proc. Natl. Acad. Sci. U.S.A.">
        <title>tRNAHis guanylyltransferase catalyzes a 3'-5' polymerization reaction that is distinct from G-1 addition.</title>
        <authorList>
            <person name="Jackman J.E."/>
            <person name="Phizicky E.M."/>
        </authorList>
    </citation>
    <scope>FUNCTION</scope>
    <scope>CATALYTIC ACTIVITY</scope>
</reference>
<reference key="9">
    <citation type="journal article" date="2006" name="RNA">
        <title>tRNAHis guanylyltransferase adds G-1 to the 5' end of tRNAHis by recognition of the anticodon, one of several features unexpectedly shared with tRNA synthetases.</title>
        <authorList>
            <person name="Jackman J.E."/>
            <person name="Phizicky E.M."/>
        </authorList>
    </citation>
    <scope>FUNCTION</scope>
    <scope>CATALYTIC ACTIVITY</scope>
    <scope>BIOPHYSICOCHEMICAL PROPERTIES</scope>
</reference>
<reference key="10">
    <citation type="journal article" date="2008" name="Biochemistry">
        <title>Identification of critical residues for G-1 addition and substrate recognition by tRNA(His) guanylyltransferase.</title>
        <authorList>
            <person name="Jackman J.E."/>
            <person name="Phizicky E.M."/>
        </authorList>
    </citation>
    <scope>FUNCTION</scope>
    <scope>CATALYTIC ACTIVITY</scope>
    <scope>BIOPHYSICOCHEMICAL PROPERTIES</scope>
    <scope>MUTAGENESIS OF ARG-27; ASP-68; ASP-77; GLU-78; ARG-93; LYS-96; ASP-131; ARG-133; ARG-150; HIS-155; ASN-157; TYR-160; LYS-190 AND TYR-202</scope>
</reference>
<reference key="11">
    <citation type="journal article" date="2012" name="Proc. Natl. Acad. Sci. U.S.A.">
        <title>N-terminal acetylome analyses and functional insights of the N-terminal acetyltransferase NatB.</title>
        <authorList>
            <person name="Van Damme P."/>
            <person name="Lasa M."/>
            <person name="Polevoda B."/>
            <person name="Gazquez C."/>
            <person name="Elosegui-Artola A."/>
            <person name="Kim D.S."/>
            <person name="De Juan-Pardo E."/>
            <person name="Demeyer K."/>
            <person name="Hole K."/>
            <person name="Larrea E."/>
            <person name="Timmerman E."/>
            <person name="Prieto J."/>
            <person name="Arnesen T."/>
            <person name="Sherman F."/>
            <person name="Gevaert K."/>
            <person name="Aldabe R."/>
        </authorList>
    </citation>
    <scope>ACETYLATION [LARGE SCALE ANALYSIS] AT ALA-2</scope>
    <scope>CLEAVAGE OF INITIATOR METHIONINE [LARGE SCALE ANALYSIS]</scope>
    <scope>IDENTIFICATION BY MASS SPECTROMETRY [LARGE SCALE ANALYSIS]</scope>
</reference>
<reference key="12">
    <citation type="journal article" date="2014" name="Biochemistry">
        <title>Saccharomyces cerevisiae Thg1 uses 5'-pyrophosphate removal to control addition of nucleotides to tRNA(His.).</title>
        <authorList>
            <person name="Smith B.A."/>
            <person name="Jackman J.E."/>
        </authorList>
    </citation>
    <scope>FUNCTION</scope>
    <scope>CATALYTIC ACTIVITY</scope>
</reference>
<reference key="13">
    <citation type="journal article" date="2021" name="RNA">
        <title>Fidelity of base-pair recognition by a 3'-5' polymerase: mechanism of the Saccharomyces cerevisiae tRNAHis guanylyltransferase.</title>
        <authorList>
            <person name="Patel K.J."/>
            <person name="Yourik P."/>
            <person name="Jackman J.E."/>
        </authorList>
    </citation>
    <scope>FUNCTION</scope>
    <scope>CATALYTIC ACTIVITY</scope>
    <scope>MUTAGENESIS OF ASN-46; TYR-160 AND THR-185</scope>
</reference>
<reference evidence="12" key="14">
    <citation type="journal article" date="2017" name="Biochem. Biophys. Res. Commun.">
        <title>Crystal structure of tRNAHis guanylyltransferase from Saccharomyces cerevisiae.</title>
        <authorList>
            <person name="Lee K."/>
            <person name="Lee E.H."/>
            <person name="Son J."/>
            <person name="Hwang K.Y."/>
        </authorList>
    </citation>
    <scope>X-RAY CRYSTALLOGRAPHY (3.00 ANGSTROMS) IN COMPLEX WITH GTP AND MAGNESIUM</scope>
    <scope>SUBUNIT</scope>
</reference>
<keyword id="KW-0002">3D-structure</keyword>
<keyword id="KW-0007">Acetylation</keyword>
<keyword id="KW-0342">GTP-binding</keyword>
<keyword id="KW-0460">Magnesium</keyword>
<keyword id="KW-0479">Metal-binding</keyword>
<keyword id="KW-0547">Nucleotide-binding</keyword>
<keyword id="KW-0548">Nucleotidyltransferase</keyword>
<keyword id="KW-1185">Reference proteome</keyword>
<keyword id="KW-0808">Transferase</keyword>
<keyword id="KW-0819">tRNA processing</keyword>
<dbReference type="EC" id="2.7.7.79" evidence="2 5 6"/>
<dbReference type="EMBL" id="DQ115389">
    <property type="protein sequence ID" value="AAZ22487.1"/>
    <property type="molecule type" value="Genomic_DNA"/>
</dbReference>
<dbReference type="EMBL" id="Z72809">
    <property type="protein sequence ID" value="CAA97007.1"/>
    <property type="molecule type" value="Genomic_DNA"/>
</dbReference>
<dbReference type="EMBL" id="AY558269">
    <property type="protein sequence ID" value="AAS56595.1"/>
    <property type="molecule type" value="Genomic_DNA"/>
</dbReference>
<dbReference type="EMBL" id="BK006941">
    <property type="protein sequence ID" value="DAA08119.1"/>
    <property type="molecule type" value="Genomic_DNA"/>
</dbReference>
<dbReference type="PIR" id="S64315">
    <property type="entry name" value="S64315"/>
</dbReference>
<dbReference type="RefSeq" id="NP_011538.3">
    <property type="nucleotide sequence ID" value="NM_001181153.3"/>
</dbReference>
<dbReference type="PDB" id="5XOX">
    <property type="method" value="X-ray"/>
    <property type="resolution" value="3.00 A"/>
    <property type="chains" value="A/B/C/D/E/F=1-237"/>
</dbReference>
<dbReference type="PDBsum" id="5XOX"/>
<dbReference type="SMR" id="P53215"/>
<dbReference type="BioGRID" id="33266">
    <property type="interactions" value="84"/>
</dbReference>
<dbReference type="DIP" id="DIP-1670N"/>
<dbReference type="FunCoup" id="P53215">
    <property type="interactions" value="880"/>
</dbReference>
<dbReference type="IntAct" id="P53215">
    <property type="interactions" value="73"/>
</dbReference>
<dbReference type="MINT" id="P53215"/>
<dbReference type="STRING" id="4932.YGR024C"/>
<dbReference type="iPTMnet" id="P53215"/>
<dbReference type="PaxDb" id="4932-YGR024C"/>
<dbReference type="PeptideAtlas" id="P53215"/>
<dbReference type="EnsemblFungi" id="YGR024C_mRNA">
    <property type="protein sequence ID" value="YGR024C"/>
    <property type="gene ID" value="YGR024C"/>
</dbReference>
<dbReference type="GeneID" id="852908"/>
<dbReference type="KEGG" id="sce:YGR024C"/>
<dbReference type="AGR" id="SGD:S000003256"/>
<dbReference type="SGD" id="S000003256">
    <property type="gene designation" value="THG1"/>
</dbReference>
<dbReference type="VEuPathDB" id="FungiDB:YGR024C"/>
<dbReference type="eggNOG" id="KOG2721">
    <property type="taxonomic scope" value="Eukaryota"/>
</dbReference>
<dbReference type="GeneTree" id="ENSGT00390000011705"/>
<dbReference type="HOGENOM" id="CLU_044271_0_1_1"/>
<dbReference type="InParanoid" id="P53215"/>
<dbReference type="OMA" id="WKQHTEI"/>
<dbReference type="OrthoDB" id="62560at2759"/>
<dbReference type="BioCyc" id="MetaCyc:G3O-30749-MONOMER"/>
<dbReference type="BioCyc" id="YEAST:G3O-30749-MONOMER"/>
<dbReference type="BRENDA" id="2.7.7.79">
    <property type="organism ID" value="984"/>
</dbReference>
<dbReference type="BioGRID-ORCS" id="852908">
    <property type="hits" value="0 hits in 10 CRISPR screens"/>
</dbReference>
<dbReference type="PRO" id="PR:P53215"/>
<dbReference type="Proteomes" id="UP000002311">
    <property type="component" value="Chromosome VII"/>
</dbReference>
<dbReference type="RNAct" id="P53215">
    <property type="molecule type" value="protein"/>
</dbReference>
<dbReference type="GO" id="GO:0005737">
    <property type="term" value="C:cytoplasm"/>
    <property type="evidence" value="ECO:0007005"/>
    <property type="project" value="SGD"/>
</dbReference>
<dbReference type="GO" id="GO:0005634">
    <property type="term" value="C:nucleus"/>
    <property type="evidence" value="ECO:0007005"/>
    <property type="project" value="SGD"/>
</dbReference>
<dbReference type="GO" id="GO:0097748">
    <property type="term" value="F:3'-5' RNA polymerase activity"/>
    <property type="evidence" value="ECO:0007669"/>
    <property type="project" value="RHEA"/>
</dbReference>
<dbReference type="GO" id="GO:0005525">
    <property type="term" value="F:GTP binding"/>
    <property type="evidence" value="ECO:0007669"/>
    <property type="project" value="UniProtKB-KW"/>
</dbReference>
<dbReference type="GO" id="GO:0042802">
    <property type="term" value="F:identical protein binding"/>
    <property type="evidence" value="ECO:0000353"/>
    <property type="project" value="IntAct"/>
</dbReference>
<dbReference type="GO" id="GO:0000287">
    <property type="term" value="F:magnesium ion binding"/>
    <property type="evidence" value="ECO:0007669"/>
    <property type="project" value="InterPro"/>
</dbReference>
<dbReference type="GO" id="GO:0008193">
    <property type="term" value="F:tRNA guanylyltransferase activity"/>
    <property type="evidence" value="ECO:0000314"/>
    <property type="project" value="SGD"/>
</dbReference>
<dbReference type="GO" id="GO:0006400">
    <property type="term" value="P:tRNA modification"/>
    <property type="evidence" value="ECO:0000314"/>
    <property type="project" value="SGD"/>
</dbReference>
<dbReference type="GO" id="GO:0008033">
    <property type="term" value="P:tRNA processing"/>
    <property type="evidence" value="ECO:0000250"/>
    <property type="project" value="UniProtKB"/>
</dbReference>
<dbReference type="FunFam" id="3.30.70.3000:FF:000003">
    <property type="entry name" value="tRNA(His) guanylyltransferase"/>
    <property type="match status" value="1"/>
</dbReference>
<dbReference type="Gene3D" id="3.30.70.3000">
    <property type="match status" value="1"/>
</dbReference>
<dbReference type="InterPro" id="IPR025845">
    <property type="entry name" value="Thg1_C_dom"/>
</dbReference>
<dbReference type="InterPro" id="IPR024956">
    <property type="entry name" value="tRNAHis_GuaTrfase_cat"/>
</dbReference>
<dbReference type="InterPro" id="IPR007537">
    <property type="entry name" value="tRNAHis_GuaTrfase_Thg1"/>
</dbReference>
<dbReference type="InterPro" id="IPR038469">
    <property type="entry name" value="tRNAHis_GuaTrfase_Thg1_sf"/>
</dbReference>
<dbReference type="PANTHER" id="PTHR12729">
    <property type="entry name" value="TRNA(HIS) GUANYLYLTRANSFERASE-RELATED"/>
    <property type="match status" value="1"/>
</dbReference>
<dbReference type="PANTHER" id="PTHR12729:SF6">
    <property type="entry name" value="TRNA(HIS) GUANYLYLTRANSFERASE-RELATED"/>
    <property type="match status" value="1"/>
</dbReference>
<dbReference type="Pfam" id="PF04446">
    <property type="entry name" value="Thg1"/>
    <property type="match status" value="1"/>
</dbReference>
<dbReference type="Pfam" id="PF14413">
    <property type="entry name" value="Thg1C"/>
    <property type="match status" value="1"/>
</dbReference>
<dbReference type="PIRSF" id="PIRSF028980">
    <property type="entry name" value="tRNAHis_guanylyltransferase"/>
    <property type="match status" value="1"/>
</dbReference>
<name>THG1_YEAST</name>
<comment type="function">
    <text evidence="2 3 4 5 6 8">Acts as a tRNA(His) guanylyltransferase that catalyzes 3'-5' addition of a single guanosine residue to the -1 position of tRNA(His), to form a non-Watson-Crick G(-1):A-73 base pair (PubMed:14633974, PubMed:16625026, PubMed:18366186, PubMed:24548272, PubMed:33790044). After addition of G(-1), THG1 removes pyrophosphate from the tRNA 5'-end, generating 5'-monophosphorylated G(-1)-containing tRNA which is important for recognition of tRNA(His) by its cognate histidyl-tRNA synthetase (PubMed:24548272). In addition to the single-G(-1) addition reaction, THG1 polymerizes multiple G residues to the 5'-end of tRNA(His) variants using the 3'-end of the tRNA(His) acceptor stem as a template (PubMed:16731615, PubMed:24548272, PubMed:33790044).</text>
</comment>
<comment type="catalytic activity">
    <reaction evidence="2 3 5 6">
        <text>a 5'-end ribonucleotide-tRNA(His) + GTP + ATP + H2O = a 5'-end phospho-guanosine-ribonucleotide-tRNA(His) + AMP + 2 diphosphate + H(+)</text>
        <dbReference type="Rhea" id="RHEA:54564"/>
        <dbReference type="Rhea" id="RHEA-COMP:14193"/>
        <dbReference type="Rhea" id="RHEA-COMP:14917"/>
        <dbReference type="ChEBI" id="CHEBI:15377"/>
        <dbReference type="ChEBI" id="CHEBI:15378"/>
        <dbReference type="ChEBI" id="CHEBI:30616"/>
        <dbReference type="ChEBI" id="CHEBI:33019"/>
        <dbReference type="ChEBI" id="CHEBI:37565"/>
        <dbReference type="ChEBI" id="CHEBI:138282"/>
        <dbReference type="ChEBI" id="CHEBI:141847"/>
        <dbReference type="ChEBI" id="CHEBI:456215"/>
        <dbReference type="EC" id="2.7.7.79"/>
    </reaction>
    <physiologicalReaction direction="left-to-right" evidence="2 6">
        <dbReference type="Rhea" id="RHEA:54565"/>
    </physiologicalReaction>
</comment>
<comment type="catalytic activity">
    <reaction evidence="4 6 8">
        <text>a 5'-end ribonucleotide-RNA + a ribonucleoside 5'-triphosphate + ATP + H2O = a 5'-end phospho-ribonucleoside-ribonucleotide-RNA + AMP + 2 diphosphate + H(+)</text>
        <dbReference type="Rhea" id="RHEA:57528"/>
        <dbReference type="Rhea" id="RHEA-COMP:14919"/>
        <dbReference type="Rhea" id="RHEA-COMP:14921"/>
        <dbReference type="ChEBI" id="CHEBI:15377"/>
        <dbReference type="ChEBI" id="CHEBI:15378"/>
        <dbReference type="ChEBI" id="CHEBI:30616"/>
        <dbReference type="ChEBI" id="CHEBI:33019"/>
        <dbReference type="ChEBI" id="CHEBI:61557"/>
        <dbReference type="ChEBI" id="CHEBI:138282"/>
        <dbReference type="ChEBI" id="CHEBI:141856"/>
        <dbReference type="ChEBI" id="CHEBI:456215"/>
    </reaction>
    <physiologicalReaction direction="left-to-right" evidence="4 6 8">
        <dbReference type="Rhea" id="RHEA:57529"/>
    </physiologicalReaction>
</comment>
<comment type="cofactor">
    <cofactor evidence="7">
        <name>Mg(2+)</name>
        <dbReference type="ChEBI" id="CHEBI:18420"/>
    </cofactor>
</comment>
<comment type="biophysicochemical properties">
    <kinetics>
        <KM evidence="3 5">25 uM for ppp-tRNA(Phe)</KM>
        <KM evidence="3 5">0.16 uM for ppp-tRNA(His)</KM>
        <KM evidence="3">0.7 uM for p-tRNA(His)</KM>
        <KM evidence="3 5">6.46 uM for ppp-tRNA(Phe)-GUG</KM>
    </kinetics>
</comment>
<comment type="subunit">
    <text evidence="7">Homotetramer.</text>
</comment>
<comment type="interaction">
    <interactant intactId="EBI-23112">
        <id>P53215</id>
    </interactant>
    <interactant intactId="EBI-23112">
        <id>P53215</id>
        <label>THG1</label>
    </interactant>
    <organismsDiffer>false</organismsDiffer>
    <experiments>3</experiments>
</comment>
<comment type="miscellaneous">
    <text evidence="1">Present with 1170 molecules/cell in log phase SD medium.</text>
</comment>
<comment type="similarity">
    <text evidence="11">Belongs to the tRNA(His) guanylyltransferase family.</text>
</comment>
<sequence length="237" mass="27757">MANSKFGYVRQFETHDVILPQCYIVVRIDGKKFHEFSKFYEFAKPNDENALKLMNACAKNLVLKYKNDIILAFGESDEYSFILKSSTTLFNRRKDKLATLFGSFFTSNYVALWAKFFPEKPLNIKHLPYFDSRCVAYPNLQTIKDYLSWRYVDTHINNLYNTTFWQLIIKCGLTPQESEKKLCGTFSNEKQEILFSECGINYNNEPEMFKKGSLVTRKGEILHINVIAQIDELFEGY</sequence>
<proteinExistence type="evidence at protein level"/>
<gene>
    <name evidence="10" type="primary">THG1</name>
    <name type="ordered locus">YGR024C</name>
</gene>
<evidence type="ECO:0000269" key="1">
    <source>
    </source>
</evidence>
<evidence type="ECO:0000269" key="2">
    <source>
    </source>
</evidence>
<evidence type="ECO:0000269" key="3">
    <source>
    </source>
</evidence>
<evidence type="ECO:0000269" key="4">
    <source>
    </source>
</evidence>
<evidence type="ECO:0000269" key="5">
    <source>
    </source>
</evidence>
<evidence type="ECO:0000269" key="6">
    <source>
    </source>
</evidence>
<evidence type="ECO:0000269" key="7">
    <source>
    </source>
</evidence>
<evidence type="ECO:0000269" key="8">
    <source>
    </source>
</evidence>
<evidence type="ECO:0000269" key="9">
    <source>
    </source>
</evidence>
<evidence type="ECO:0000303" key="10">
    <source>
    </source>
</evidence>
<evidence type="ECO:0000305" key="11"/>
<evidence type="ECO:0007744" key="12">
    <source>
        <dbReference type="PDB" id="5XOX"/>
    </source>
</evidence>
<evidence type="ECO:0007744" key="13">
    <source>
    </source>
</evidence>
<evidence type="ECO:0007829" key="14">
    <source>
        <dbReference type="PDB" id="5XOX"/>
    </source>
</evidence>